<gene>
    <name type="primary">ergic1</name>
    <name type="synonym">ergic32</name>
    <name type="ORF">zgc:114085</name>
</gene>
<evidence type="ECO:0000250" key="1"/>
<evidence type="ECO:0000255" key="2"/>
<evidence type="ECO:0000305" key="3"/>
<sequence length="290" mass="32529">MSFDVRRFDIYRKVPKDLTQPTYTGAFISICCCVFMLFLFLSELTGFIATEIVNELYVDDPDKDSGGKIDVSLNISLPNLHCDLVGLDIQDEMGRHEVGHIENSMKVPLNNGHGCRFEGEFSINKVPGNFHVSTHSATAQPQSPDMTHIIHKLAFGAKLQVQHVQGAFNALGGADRLQSNALASHDYILKIVPTVYEELGGKQRFSYQYTVANKEYVAYSHTGRIIPAIWFRYDLSPITVKYTERRRPFYRFITTICAIIGGTFTVAGIIDSCIFTASEAWKKIQIGKMS</sequence>
<dbReference type="EMBL" id="BC097146">
    <property type="protein sequence ID" value="AAH97146.1"/>
    <property type="molecule type" value="mRNA"/>
</dbReference>
<dbReference type="RefSeq" id="NP_001025133.1">
    <property type="nucleotide sequence ID" value="NM_001029962.1"/>
</dbReference>
<dbReference type="SMR" id="Q4V8Y6"/>
<dbReference type="FunCoup" id="Q4V8Y6">
    <property type="interactions" value="309"/>
</dbReference>
<dbReference type="STRING" id="7955.ENSDARP00000139851"/>
<dbReference type="GlyCosmos" id="Q4V8Y6">
    <property type="glycosylation" value="1 site, No reported glycans"/>
</dbReference>
<dbReference type="PaxDb" id="7955-ENSDARP00000105911"/>
<dbReference type="GeneID" id="567774"/>
<dbReference type="KEGG" id="dre:567774"/>
<dbReference type="AGR" id="ZFIN:ZDB-GENE-050913-75"/>
<dbReference type="CTD" id="57222"/>
<dbReference type="ZFIN" id="ZDB-GENE-050913-75">
    <property type="gene designation" value="ergic1"/>
</dbReference>
<dbReference type="eggNOG" id="KOG2667">
    <property type="taxonomic scope" value="Eukaryota"/>
</dbReference>
<dbReference type="InParanoid" id="Q4V8Y6"/>
<dbReference type="OrthoDB" id="270930at2759"/>
<dbReference type="PhylomeDB" id="Q4V8Y6"/>
<dbReference type="PRO" id="PR:Q4V8Y6"/>
<dbReference type="Proteomes" id="UP000000437">
    <property type="component" value="Chromosome 14"/>
</dbReference>
<dbReference type="GO" id="GO:0030134">
    <property type="term" value="C:COPII-coated ER to Golgi transport vesicle"/>
    <property type="evidence" value="ECO:0000318"/>
    <property type="project" value="GO_Central"/>
</dbReference>
<dbReference type="GO" id="GO:0005783">
    <property type="term" value="C:endoplasmic reticulum"/>
    <property type="evidence" value="ECO:0000318"/>
    <property type="project" value="GO_Central"/>
</dbReference>
<dbReference type="GO" id="GO:0005789">
    <property type="term" value="C:endoplasmic reticulum membrane"/>
    <property type="evidence" value="ECO:0000318"/>
    <property type="project" value="GO_Central"/>
</dbReference>
<dbReference type="GO" id="GO:0033116">
    <property type="term" value="C:endoplasmic reticulum-Golgi intermediate compartment membrane"/>
    <property type="evidence" value="ECO:0007669"/>
    <property type="project" value="UniProtKB-SubCell"/>
</dbReference>
<dbReference type="GO" id="GO:0000139">
    <property type="term" value="C:Golgi membrane"/>
    <property type="evidence" value="ECO:0000318"/>
    <property type="project" value="GO_Central"/>
</dbReference>
<dbReference type="GO" id="GO:0006888">
    <property type="term" value="P:endoplasmic reticulum to Golgi vesicle-mediated transport"/>
    <property type="evidence" value="ECO:0000318"/>
    <property type="project" value="GO_Central"/>
</dbReference>
<dbReference type="GO" id="GO:0006890">
    <property type="term" value="P:retrograde vesicle-mediated transport, Golgi to endoplasmic reticulum"/>
    <property type="evidence" value="ECO:0000318"/>
    <property type="project" value="GO_Central"/>
</dbReference>
<dbReference type="InterPro" id="IPR045888">
    <property type="entry name" value="Erv"/>
</dbReference>
<dbReference type="InterPro" id="IPR012936">
    <property type="entry name" value="Erv_C"/>
</dbReference>
<dbReference type="InterPro" id="IPR039542">
    <property type="entry name" value="Erv_N"/>
</dbReference>
<dbReference type="PANTHER" id="PTHR10984">
    <property type="entry name" value="ENDOPLASMIC RETICULUM-GOLGI INTERMEDIATE COMPARTMENT PROTEIN"/>
    <property type="match status" value="1"/>
</dbReference>
<dbReference type="PANTHER" id="PTHR10984:SF36">
    <property type="entry name" value="ENDOPLASMIC RETICULUM-GOLGI INTERMEDIATE COMPARTMENT PROTEIN 1"/>
    <property type="match status" value="1"/>
</dbReference>
<dbReference type="Pfam" id="PF07970">
    <property type="entry name" value="COPIIcoated_ERV"/>
    <property type="match status" value="1"/>
</dbReference>
<dbReference type="Pfam" id="PF13850">
    <property type="entry name" value="ERGIC_N"/>
    <property type="match status" value="1"/>
</dbReference>
<proteinExistence type="evidence at transcript level"/>
<keyword id="KW-0256">Endoplasmic reticulum</keyword>
<keyword id="KW-0931">ER-Golgi transport</keyword>
<keyword id="KW-0325">Glycoprotein</keyword>
<keyword id="KW-0333">Golgi apparatus</keyword>
<keyword id="KW-0472">Membrane</keyword>
<keyword id="KW-1185">Reference proteome</keyword>
<keyword id="KW-0812">Transmembrane</keyword>
<keyword id="KW-1133">Transmembrane helix</keyword>
<keyword id="KW-0813">Transport</keyword>
<protein>
    <recommendedName>
        <fullName>Endoplasmic reticulum-Golgi intermediate compartment protein 1</fullName>
    </recommendedName>
    <alternativeName>
        <fullName>ER-Golgi intermediate compartment 32 kDa protein</fullName>
        <shortName>ERGIC-32</shortName>
    </alternativeName>
</protein>
<reference key="1">
    <citation type="submission" date="2005-06" db="EMBL/GenBank/DDBJ databases">
        <authorList>
            <consortium name="NIH - Zebrafish Gene Collection (ZGC) project"/>
        </authorList>
    </citation>
    <scope>NUCLEOTIDE SEQUENCE [LARGE SCALE MRNA]</scope>
    <source>
        <tissue>Embryo</tissue>
    </source>
</reference>
<organism>
    <name type="scientific">Danio rerio</name>
    <name type="common">Zebrafish</name>
    <name type="synonym">Brachydanio rerio</name>
    <dbReference type="NCBI Taxonomy" id="7955"/>
    <lineage>
        <taxon>Eukaryota</taxon>
        <taxon>Metazoa</taxon>
        <taxon>Chordata</taxon>
        <taxon>Craniata</taxon>
        <taxon>Vertebrata</taxon>
        <taxon>Euteleostomi</taxon>
        <taxon>Actinopterygii</taxon>
        <taxon>Neopterygii</taxon>
        <taxon>Teleostei</taxon>
        <taxon>Ostariophysi</taxon>
        <taxon>Cypriniformes</taxon>
        <taxon>Danionidae</taxon>
        <taxon>Danioninae</taxon>
        <taxon>Danio</taxon>
    </lineage>
</organism>
<comment type="function">
    <text evidence="1">Possible role in transport between endoplasmic reticulum and Golgi.</text>
</comment>
<comment type="subcellular location">
    <subcellularLocation>
        <location evidence="1">Endoplasmic reticulum membrane</location>
        <topology evidence="1">Multi-pass membrane protein</topology>
    </subcellularLocation>
    <subcellularLocation>
        <location evidence="1">Endoplasmic reticulum-Golgi intermediate compartment membrane</location>
        <topology evidence="1">Multi-pass membrane protein</topology>
    </subcellularLocation>
    <subcellularLocation>
        <location evidence="1">Golgi apparatus membrane</location>
        <topology evidence="1">Multi-pass membrane protein</topology>
    </subcellularLocation>
</comment>
<comment type="similarity">
    <text evidence="3">Belongs to the ERGIC family.</text>
</comment>
<feature type="chain" id="PRO_0000087022" description="Endoplasmic reticulum-Golgi intermediate compartment protein 1">
    <location>
        <begin position="1"/>
        <end position="290"/>
    </location>
</feature>
<feature type="topological domain" description="Cytoplasmic" evidence="2">
    <location>
        <begin position="1"/>
        <end position="27"/>
    </location>
</feature>
<feature type="transmembrane region" description="Helical" evidence="2">
    <location>
        <begin position="28"/>
        <end position="48"/>
    </location>
</feature>
<feature type="topological domain" description="Lumenal" evidence="2">
    <location>
        <begin position="49"/>
        <end position="254"/>
    </location>
</feature>
<feature type="transmembrane region" description="Helical" evidence="2">
    <location>
        <begin position="255"/>
        <end position="275"/>
    </location>
</feature>
<feature type="topological domain" description="Cytoplasmic" evidence="2">
    <location>
        <begin position="276"/>
        <end position="290"/>
    </location>
</feature>
<feature type="glycosylation site" description="N-linked (GlcNAc...) asparagine" evidence="1">
    <location>
        <position position="74"/>
    </location>
</feature>
<accession>Q4V8Y6</accession>
<name>ERGI1_DANRE</name>